<accession>P0A527</accession>
<accession>A0A1R3Y180</accession>
<accession>O53188</accession>
<accession>X2BKX6</accession>
<reference key="1">
    <citation type="journal article" date="2003" name="Proc. Natl. Acad. Sci. U.S.A.">
        <title>The complete genome sequence of Mycobacterium bovis.</title>
        <authorList>
            <person name="Garnier T."/>
            <person name="Eiglmeier K."/>
            <person name="Camus J.-C."/>
            <person name="Medina N."/>
            <person name="Mansoor H."/>
            <person name="Pryor M."/>
            <person name="Duthoy S."/>
            <person name="Grondin S."/>
            <person name="Lacroix C."/>
            <person name="Monsempe C."/>
            <person name="Simon S."/>
            <person name="Harris B."/>
            <person name="Atkin R."/>
            <person name="Doggett J."/>
            <person name="Mayes R."/>
            <person name="Keating L."/>
            <person name="Wheeler P.R."/>
            <person name="Parkhill J."/>
            <person name="Barrell B.G."/>
            <person name="Cole S.T."/>
            <person name="Gordon S.V."/>
            <person name="Hewinson R.G."/>
        </authorList>
    </citation>
    <scope>NUCLEOTIDE SEQUENCE [LARGE SCALE GENOMIC DNA]</scope>
    <source>
        <strain>ATCC BAA-935 / AF2122/97</strain>
    </source>
</reference>
<reference key="2">
    <citation type="journal article" date="2017" name="Genome Announc.">
        <title>Updated reference genome sequence and annotation of Mycobacterium bovis AF2122/97.</title>
        <authorList>
            <person name="Malone K.M."/>
            <person name="Farrell D."/>
            <person name="Stuber T.P."/>
            <person name="Schubert O.T."/>
            <person name="Aebersold R."/>
            <person name="Robbe-Austerman S."/>
            <person name="Gordon S.V."/>
        </authorList>
    </citation>
    <scope>NUCLEOTIDE SEQUENCE [LARGE SCALE GENOMIC DNA]</scope>
    <scope>GENOME REANNOTATION</scope>
    <source>
        <strain>ATCC BAA-935 / AF2122/97</strain>
    </source>
</reference>
<comment type="function">
    <text evidence="1">Cleaves peptides in various proteins in a process that requires ATP hydrolysis. Has a chymotrypsin-like activity. Plays a major role in the degradation of misfolded proteins.</text>
</comment>
<comment type="catalytic activity">
    <reaction evidence="1">
        <text>Hydrolysis of proteins to small peptides in the presence of ATP and magnesium. alpha-casein is the usual test substrate. In the absence of ATP, only oligopeptides shorter than five residues are hydrolyzed (such as succinyl-Leu-Tyr-|-NHMec, and Leu-Tyr-Leu-|-Tyr-Trp, in which cleavage of the -Tyr-|-Leu- and -Tyr-|-Trp bonds also occurs).</text>
        <dbReference type="EC" id="3.4.21.92"/>
    </reaction>
</comment>
<comment type="subunit">
    <text evidence="1">Fourteen ClpP subunits assemble into 2 heptameric rings which stack back to back to give a disk-like structure with a central cavity, resembling the structure of eukaryotic proteasomes.</text>
</comment>
<comment type="subcellular location">
    <subcellularLocation>
        <location evidence="1">Cytoplasm</location>
    </subcellularLocation>
</comment>
<comment type="similarity">
    <text evidence="1">Belongs to the peptidase S14 family.</text>
</comment>
<keyword id="KW-0963">Cytoplasm</keyword>
<keyword id="KW-0378">Hydrolase</keyword>
<keyword id="KW-0645">Protease</keyword>
<keyword id="KW-1185">Reference proteome</keyword>
<keyword id="KW-0720">Serine protease</keyword>
<organism>
    <name type="scientific">Mycobacterium bovis (strain ATCC BAA-935 / AF2122/97)</name>
    <dbReference type="NCBI Taxonomy" id="233413"/>
    <lineage>
        <taxon>Bacteria</taxon>
        <taxon>Bacillati</taxon>
        <taxon>Actinomycetota</taxon>
        <taxon>Actinomycetes</taxon>
        <taxon>Mycobacteriales</taxon>
        <taxon>Mycobacteriaceae</taxon>
        <taxon>Mycobacterium</taxon>
        <taxon>Mycobacterium tuberculosis complex</taxon>
    </lineage>
</organism>
<sequence length="200" mass="21708">MSQVTDMRSNSQGLSLTDSVYERLLSERIIFLGSEVNDEIANRLCAQILLLAAEDASKDISLYINSPGGSISAGMAIYDTMVLAPCDIATYAMGMAASMGEFLLAAGTKGKRYALPHARILMHQPLGGVTGSAADIAIQAEQFAVIKKEMFRLNAEFTGQPIERIEADSDRDRWFTAAEALEYGFVDHIITRAHVNGEAQ</sequence>
<proteinExistence type="inferred from homology"/>
<feature type="chain" id="PRO_0000179590" description="ATP-dependent Clp protease proteolytic subunit 1">
    <location>
        <begin position="1"/>
        <end position="200"/>
    </location>
</feature>
<feature type="active site" description="Nucleophile" evidence="1">
    <location>
        <position position="98"/>
    </location>
</feature>
<feature type="active site" evidence="1">
    <location>
        <position position="123"/>
    </location>
</feature>
<dbReference type="EC" id="3.4.21.92" evidence="1"/>
<dbReference type="EMBL" id="LT708304">
    <property type="protein sequence ID" value="SIU01103.1"/>
    <property type="molecule type" value="Genomic_DNA"/>
</dbReference>
<dbReference type="RefSeq" id="NP_856135.1">
    <property type="nucleotide sequence ID" value="NC_002945.3"/>
</dbReference>
<dbReference type="RefSeq" id="WP_003412650.1">
    <property type="nucleotide sequence ID" value="NC_002945.4"/>
</dbReference>
<dbReference type="SMR" id="P0A527"/>
<dbReference type="MEROPS" id="S14.008"/>
<dbReference type="GeneID" id="45426451"/>
<dbReference type="KEGG" id="mbo:BQ2027_MB2488C"/>
<dbReference type="PATRIC" id="fig|233413.5.peg.2739"/>
<dbReference type="Proteomes" id="UP000001419">
    <property type="component" value="Chromosome"/>
</dbReference>
<dbReference type="GO" id="GO:0005737">
    <property type="term" value="C:cytoplasm"/>
    <property type="evidence" value="ECO:0007669"/>
    <property type="project" value="UniProtKB-SubCell"/>
</dbReference>
<dbReference type="GO" id="GO:0009368">
    <property type="term" value="C:endopeptidase Clp complex"/>
    <property type="evidence" value="ECO:0007669"/>
    <property type="project" value="TreeGrafter"/>
</dbReference>
<dbReference type="GO" id="GO:0004176">
    <property type="term" value="F:ATP-dependent peptidase activity"/>
    <property type="evidence" value="ECO:0007669"/>
    <property type="project" value="InterPro"/>
</dbReference>
<dbReference type="GO" id="GO:0051117">
    <property type="term" value="F:ATPase binding"/>
    <property type="evidence" value="ECO:0007669"/>
    <property type="project" value="TreeGrafter"/>
</dbReference>
<dbReference type="GO" id="GO:0004252">
    <property type="term" value="F:serine-type endopeptidase activity"/>
    <property type="evidence" value="ECO:0007669"/>
    <property type="project" value="UniProtKB-UniRule"/>
</dbReference>
<dbReference type="GO" id="GO:0006515">
    <property type="term" value="P:protein quality control for misfolded or incompletely synthesized proteins"/>
    <property type="evidence" value="ECO:0007669"/>
    <property type="project" value="TreeGrafter"/>
</dbReference>
<dbReference type="CDD" id="cd07017">
    <property type="entry name" value="S14_ClpP_2"/>
    <property type="match status" value="1"/>
</dbReference>
<dbReference type="FunFam" id="3.90.226.10:FF:000002">
    <property type="entry name" value="ATP-dependent Clp protease proteolytic subunit"/>
    <property type="match status" value="1"/>
</dbReference>
<dbReference type="Gene3D" id="3.90.226.10">
    <property type="entry name" value="2-enoyl-CoA Hydratase, Chain A, domain 1"/>
    <property type="match status" value="1"/>
</dbReference>
<dbReference type="HAMAP" id="MF_00444">
    <property type="entry name" value="ClpP"/>
    <property type="match status" value="1"/>
</dbReference>
<dbReference type="InterPro" id="IPR001907">
    <property type="entry name" value="ClpP"/>
</dbReference>
<dbReference type="InterPro" id="IPR029045">
    <property type="entry name" value="ClpP/crotonase-like_dom_sf"/>
</dbReference>
<dbReference type="InterPro" id="IPR023562">
    <property type="entry name" value="ClpP/TepA"/>
</dbReference>
<dbReference type="InterPro" id="IPR033135">
    <property type="entry name" value="ClpP_His_AS"/>
</dbReference>
<dbReference type="NCBIfam" id="NF001368">
    <property type="entry name" value="PRK00277.1"/>
    <property type="match status" value="1"/>
</dbReference>
<dbReference type="NCBIfam" id="NF009205">
    <property type="entry name" value="PRK12553.1"/>
    <property type="match status" value="1"/>
</dbReference>
<dbReference type="PANTHER" id="PTHR10381">
    <property type="entry name" value="ATP-DEPENDENT CLP PROTEASE PROTEOLYTIC SUBUNIT"/>
    <property type="match status" value="1"/>
</dbReference>
<dbReference type="PANTHER" id="PTHR10381:SF70">
    <property type="entry name" value="ATP-DEPENDENT CLP PROTEASE PROTEOLYTIC SUBUNIT"/>
    <property type="match status" value="1"/>
</dbReference>
<dbReference type="Pfam" id="PF00574">
    <property type="entry name" value="CLP_protease"/>
    <property type="match status" value="1"/>
</dbReference>
<dbReference type="PRINTS" id="PR00127">
    <property type="entry name" value="CLPPROTEASEP"/>
</dbReference>
<dbReference type="SUPFAM" id="SSF52096">
    <property type="entry name" value="ClpP/crotonase"/>
    <property type="match status" value="1"/>
</dbReference>
<dbReference type="PROSITE" id="PS00382">
    <property type="entry name" value="CLP_PROTEASE_HIS"/>
    <property type="match status" value="1"/>
</dbReference>
<protein>
    <recommendedName>
        <fullName evidence="1">ATP-dependent Clp protease proteolytic subunit 1</fullName>
        <ecNumber evidence="1">3.4.21.92</ecNumber>
    </recommendedName>
    <alternativeName>
        <fullName evidence="1">Endopeptidase Clp 1</fullName>
    </alternativeName>
</protein>
<name>CLPP1_MYCBO</name>
<evidence type="ECO:0000255" key="1">
    <source>
        <dbReference type="HAMAP-Rule" id="MF_00444"/>
    </source>
</evidence>
<gene>
    <name evidence="1" type="primary">clpP1</name>
    <name type="synonym">clpP</name>
    <name type="ordered locus">BQ2027_MB2488C</name>
</gene>